<reference key="1">
    <citation type="journal article" date="2002" name="Proc. Natl. Acad. Sci. U.S.A.">
        <title>Genome sequence of the hyperthermophilic crenarchaeon Pyrobaculum aerophilum.</title>
        <authorList>
            <person name="Fitz-Gibbon S.T."/>
            <person name="Ladner H."/>
            <person name="Kim U.-J."/>
            <person name="Stetter K.O."/>
            <person name="Simon M.I."/>
            <person name="Miller J.H."/>
        </authorList>
    </citation>
    <scope>NUCLEOTIDE SEQUENCE [LARGE SCALE GENOMIC DNA]</scope>
    <source>
        <strain>ATCC 51768 / DSM 7523 / JCM 9630 / CIP 104966 / NBRC 100827 / IM2</strain>
    </source>
</reference>
<organism>
    <name type="scientific">Pyrobaculum aerophilum (strain ATCC 51768 / DSM 7523 / JCM 9630 / CIP 104966 / NBRC 100827 / IM2)</name>
    <dbReference type="NCBI Taxonomy" id="178306"/>
    <lineage>
        <taxon>Archaea</taxon>
        <taxon>Thermoproteota</taxon>
        <taxon>Thermoprotei</taxon>
        <taxon>Thermoproteales</taxon>
        <taxon>Thermoproteaceae</taxon>
        <taxon>Pyrobaculum</taxon>
    </lineage>
</organism>
<gene>
    <name type="ordered locus">PAE3582</name>
</gene>
<comment type="similarity">
    <text evidence="1">Belongs to the UPF0237 family.</text>
</comment>
<feature type="chain" id="PRO_0000219914" description="UPF0237 protein PAE3582">
    <location>
        <begin position="1"/>
        <end position="90"/>
    </location>
</feature>
<feature type="domain" description="ACT" evidence="1">
    <location>
        <begin position="5"/>
        <end position="74"/>
    </location>
</feature>
<protein>
    <recommendedName>
        <fullName evidence="1">UPF0237 protein PAE3582</fullName>
    </recommendedName>
</protein>
<proteinExistence type="inferred from homology"/>
<accession>Q8ZSU2</accession>
<evidence type="ECO:0000255" key="1">
    <source>
        <dbReference type="HAMAP-Rule" id="MF_01054"/>
    </source>
</evidence>
<name>Y3582_PYRAE</name>
<keyword id="KW-1185">Reference proteome</keyword>
<dbReference type="EMBL" id="AE009441">
    <property type="protein sequence ID" value="AAL65021.1"/>
    <property type="molecule type" value="Genomic_DNA"/>
</dbReference>
<dbReference type="RefSeq" id="WP_011009488.1">
    <property type="nucleotide sequence ID" value="NC_003364.1"/>
</dbReference>
<dbReference type="SMR" id="Q8ZSU2"/>
<dbReference type="STRING" id="178306.PAE3582"/>
<dbReference type="EnsemblBacteria" id="AAL65021">
    <property type="protein sequence ID" value="AAL65021"/>
    <property type="gene ID" value="PAE3582"/>
</dbReference>
<dbReference type="GeneID" id="1466155"/>
<dbReference type="KEGG" id="pai:PAE3582"/>
<dbReference type="PATRIC" id="fig|178306.9.peg.2697"/>
<dbReference type="eggNOG" id="arCOG04941">
    <property type="taxonomic scope" value="Archaea"/>
</dbReference>
<dbReference type="HOGENOM" id="CLU_155669_0_1_2"/>
<dbReference type="InParanoid" id="Q8ZSU2"/>
<dbReference type="Proteomes" id="UP000002439">
    <property type="component" value="Chromosome"/>
</dbReference>
<dbReference type="GO" id="GO:0005829">
    <property type="term" value="C:cytosol"/>
    <property type="evidence" value="ECO:0000318"/>
    <property type="project" value="GO_Central"/>
</dbReference>
<dbReference type="GO" id="GO:0006351">
    <property type="term" value="P:DNA-templated transcription"/>
    <property type="evidence" value="ECO:0000318"/>
    <property type="project" value="GO_Central"/>
</dbReference>
<dbReference type="CDD" id="cd04872">
    <property type="entry name" value="ACT_1ZPV"/>
    <property type="match status" value="1"/>
</dbReference>
<dbReference type="FunFam" id="3.30.70.260:FF:000032">
    <property type="entry name" value="UPF0237 protein SP_0238"/>
    <property type="match status" value="1"/>
</dbReference>
<dbReference type="Gene3D" id="3.30.70.260">
    <property type="match status" value="1"/>
</dbReference>
<dbReference type="HAMAP" id="MF_01054">
    <property type="entry name" value="UPF0237"/>
    <property type="match status" value="1"/>
</dbReference>
<dbReference type="InterPro" id="IPR045865">
    <property type="entry name" value="ACT-like_dom_sf"/>
</dbReference>
<dbReference type="InterPro" id="IPR002912">
    <property type="entry name" value="ACT_dom"/>
</dbReference>
<dbReference type="InterPro" id="IPR050990">
    <property type="entry name" value="UPF0237/GcvR_regulator"/>
</dbReference>
<dbReference type="InterPro" id="IPR022986">
    <property type="entry name" value="UPF0237_ACT"/>
</dbReference>
<dbReference type="NCBIfam" id="NF001220">
    <property type="entry name" value="PRK00194.1"/>
    <property type="match status" value="1"/>
</dbReference>
<dbReference type="PANTHER" id="PTHR34875">
    <property type="entry name" value="UPF0237 PROTEIN MJ1558"/>
    <property type="match status" value="1"/>
</dbReference>
<dbReference type="PANTHER" id="PTHR34875:SF6">
    <property type="entry name" value="UPF0237 PROTEIN MJ1558"/>
    <property type="match status" value="1"/>
</dbReference>
<dbReference type="Pfam" id="PF13740">
    <property type="entry name" value="ACT_6"/>
    <property type="match status" value="1"/>
</dbReference>
<dbReference type="SUPFAM" id="SSF55021">
    <property type="entry name" value="ACT-like"/>
    <property type="match status" value="1"/>
</dbReference>
<dbReference type="PROSITE" id="PS51671">
    <property type="entry name" value="ACT"/>
    <property type="match status" value="1"/>
</dbReference>
<sequence>MELAVVSVLGADRVGIVAGISSVLAKHNVNIVDISQTVVQNIFSMVMIVDISKADVDISQLRRELEEEGKRLGVMVAVYHIDVFKYMQRI</sequence>